<proteinExistence type="inferred from homology"/>
<evidence type="ECO:0000255" key="1">
    <source>
        <dbReference type="HAMAP-Rule" id="MF_00812"/>
    </source>
</evidence>
<gene>
    <name evidence="1" type="primary">tpm</name>
    <name type="ordered locus">PBPRA1684</name>
</gene>
<comment type="catalytic activity">
    <reaction evidence="1">
        <text>S-adenosyl-L-methionine + a thiopurine = S-adenosyl-L-homocysteine + a thiopurine S-methylether.</text>
        <dbReference type="EC" id="2.1.1.67"/>
    </reaction>
</comment>
<comment type="subcellular location">
    <subcellularLocation>
        <location evidence="1">Cytoplasm</location>
    </subcellularLocation>
</comment>
<comment type="similarity">
    <text evidence="1">Belongs to the class I-like SAM-binding methyltransferase superfamily. TPMT family.</text>
</comment>
<feature type="chain" id="PRO_0000220125" description="Thiopurine S-methyltransferase">
    <location>
        <begin position="1"/>
        <end position="213"/>
    </location>
</feature>
<feature type="binding site" evidence="1">
    <location>
        <position position="10"/>
    </location>
    <ligand>
        <name>S-adenosyl-L-methionine</name>
        <dbReference type="ChEBI" id="CHEBI:59789"/>
    </ligand>
</feature>
<feature type="binding site" evidence="1">
    <location>
        <position position="45"/>
    </location>
    <ligand>
        <name>S-adenosyl-L-methionine</name>
        <dbReference type="ChEBI" id="CHEBI:59789"/>
    </ligand>
</feature>
<feature type="binding site" evidence="1">
    <location>
        <position position="66"/>
    </location>
    <ligand>
        <name>S-adenosyl-L-methionine</name>
        <dbReference type="ChEBI" id="CHEBI:59789"/>
    </ligand>
</feature>
<feature type="binding site" evidence="1">
    <location>
        <position position="120"/>
    </location>
    <ligand>
        <name>S-adenosyl-L-methionine</name>
        <dbReference type="ChEBI" id="CHEBI:59789"/>
    </ligand>
</feature>
<organism>
    <name type="scientific">Photobacterium profundum (strain SS9)</name>
    <dbReference type="NCBI Taxonomy" id="298386"/>
    <lineage>
        <taxon>Bacteria</taxon>
        <taxon>Pseudomonadati</taxon>
        <taxon>Pseudomonadota</taxon>
        <taxon>Gammaproteobacteria</taxon>
        <taxon>Vibrionales</taxon>
        <taxon>Vibrionaceae</taxon>
        <taxon>Photobacterium</taxon>
    </lineage>
</organism>
<name>TPMT_PHOPR</name>
<accession>Q6LRI5</accession>
<sequence>MDAEFWHSRWAENRIGFHLDDTNPVLTQYWPMVKATRDDRVLVPMCGKSVDLVWLAQKHNNVIGIELSDIAVRSFFAEHLYTPMVTSIGHESVYAFDEITIHCGDYFSVRIDPVDVVYDRAALIAMPKNMREMYVERLLSLVKKGGRILLVTLDYPQEQLNGPPFSVMSDEVRRLFDGCNITLLARDEKDETHPRRKNGLSHFAEETWLIEVA</sequence>
<reference key="1">
    <citation type="journal article" date="2005" name="Science">
        <title>Life at depth: Photobacterium profundum genome sequence and expression analysis.</title>
        <authorList>
            <person name="Vezzi A."/>
            <person name="Campanaro S."/>
            <person name="D'Angelo M."/>
            <person name="Simonato F."/>
            <person name="Vitulo N."/>
            <person name="Lauro F.M."/>
            <person name="Cestaro A."/>
            <person name="Malacrida G."/>
            <person name="Simionati B."/>
            <person name="Cannata N."/>
            <person name="Romualdi C."/>
            <person name="Bartlett D.H."/>
            <person name="Valle G."/>
        </authorList>
    </citation>
    <scope>NUCLEOTIDE SEQUENCE [LARGE SCALE GENOMIC DNA]</scope>
    <source>
        <strain>ATCC BAA-1253 / SS9</strain>
    </source>
</reference>
<protein>
    <recommendedName>
        <fullName evidence="1">Thiopurine S-methyltransferase</fullName>
        <ecNumber evidence="1">2.1.1.67</ecNumber>
    </recommendedName>
    <alternativeName>
        <fullName evidence="1">Thiopurine methyltransferase</fullName>
    </alternativeName>
</protein>
<keyword id="KW-0963">Cytoplasm</keyword>
<keyword id="KW-0489">Methyltransferase</keyword>
<keyword id="KW-1185">Reference proteome</keyword>
<keyword id="KW-0949">S-adenosyl-L-methionine</keyword>
<keyword id="KW-0808">Transferase</keyword>
<dbReference type="EC" id="2.1.1.67" evidence="1"/>
<dbReference type="EMBL" id="CR378668">
    <property type="protein sequence ID" value="CAG20091.1"/>
    <property type="molecule type" value="Genomic_DNA"/>
</dbReference>
<dbReference type="RefSeq" id="WP_011218403.1">
    <property type="nucleotide sequence ID" value="NC_006370.1"/>
</dbReference>
<dbReference type="SMR" id="Q6LRI5"/>
<dbReference type="STRING" id="298386.PBPRA1684"/>
<dbReference type="KEGG" id="ppr:PBPRA1684"/>
<dbReference type="eggNOG" id="COG0500">
    <property type="taxonomic scope" value="Bacteria"/>
</dbReference>
<dbReference type="HOGENOM" id="CLU_085515_1_0_6"/>
<dbReference type="Proteomes" id="UP000000593">
    <property type="component" value="Chromosome 1"/>
</dbReference>
<dbReference type="GO" id="GO:0005737">
    <property type="term" value="C:cytoplasm"/>
    <property type="evidence" value="ECO:0007669"/>
    <property type="project" value="UniProtKB-SubCell"/>
</dbReference>
<dbReference type="GO" id="GO:0008119">
    <property type="term" value="F:thiopurine S-methyltransferase activity"/>
    <property type="evidence" value="ECO:0007669"/>
    <property type="project" value="UniProtKB-UniRule"/>
</dbReference>
<dbReference type="GO" id="GO:0032259">
    <property type="term" value="P:methylation"/>
    <property type="evidence" value="ECO:0007669"/>
    <property type="project" value="UniProtKB-KW"/>
</dbReference>
<dbReference type="GO" id="GO:0010038">
    <property type="term" value="P:response to metal ion"/>
    <property type="evidence" value="ECO:0007669"/>
    <property type="project" value="InterPro"/>
</dbReference>
<dbReference type="CDD" id="cd02440">
    <property type="entry name" value="AdoMet_MTases"/>
    <property type="match status" value="1"/>
</dbReference>
<dbReference type="FunFam" id="3.40.50.150:FF:000101">
    <property type="entry name" value="Thiopurine S-methyltransferase"/>
    <property type="match status" value="1"/>
</dbReference>
<dbReference type="Gene3D" id="3.40.50.150">
    <property type="entry name" value="Vaccinia Virus protein VP39"/>
    <property type="match status" value="1"/>
</dbReference>
<dbReference type="HAMAP" id="MF_00812">
    <property type="entry name" value="Thiopur_methtran"/>
    <property type="match status" value="1"/>
</dbReference>
<dbReference type="InterPro" id="IPR029063">
    <property type="entry name" value="SAM-dependent_MTases_sf"/>
</dbReference>
<dbReference type="InterPro" id="IPR022474">
    <property type="entry name" value="Thiopur_S-MeTfrase_Se/Te_detox"/>
</dbReference>
<dbReference type="InterPro" id="IPR025835">
    <property type="entry name" value="Thiopurine_S-MeTrfase"/>
</dbReference>
<dbReference type="InterPro" id="IPR008854">
    <property type="entry name" value="TPMT"/>
</dbReference>
<dbReference type="NCBIfam" id="NF009732">
    <property type="entry name" value="PRK13255.1"/>
    <property type="match status" value="1"/>
</dbReference>
<dbReference type="NCBIfam" id="TIGR03840">
    <property type="entry name" value="TMPT_Se_Te"/>
    <property type="match status" value="1"/>
</dbReference>
<dbReference type="PANTHER" id="PTHR10259">
    <property type="entry name" value="THIOPURINE S-METHYLTRANSFERASE"/>
    <property type="match status" value="1"/>
</dbReference>
<dbReference type="PANTHER" id="PTHR10259:SF11">
    <property type="entry name" value="THIOPURINE S-METHYLTRANSFERASE"/>
    <property type="match status" value="1"/>
</dbReference>
<dbReference type="Pfam" id="PF05724">
    <property type="entry name" value="TPMT"/>
    <property type="match status" value="1"/>
</dbReference>
<dbReference type="PIRSF" id="PIRSF023956">
    <property type="entry name" value="Thiopurine_S-methyltransferase"/>
    <property type="match status" value="1"/>
</dbReference>
<dbReference type="SUPFAM" id="SSF53335">
    <property type="entry name" value="S-adenosyl-L-methionine-dependent methyltransferases"/>
    <property type="match status" value="1"/>
</dbReference>
<dbReference type="PROSITE" id="PS51585">
    <property type="entry name" value="SAM_MT_TPMT"/>
    <property type="match status" value="1"/>
</dbReference>